<organism>
    <name type="scientific">Roseobacter denitrificans (strain ATCC 33942 / OCh 114)</name>
    <name type="common">Erythrobacter sp. (strain OCh 114)</name>
    <name type="synonym">Roseobacter denitrificans</name>
    <dbReference type="NCBI Taxonomy" id="375451"/>
    <lineage>
        <taxon>Bacteria</taxon>
        <taxon>Pseudomonadati</taxon>
        <taxon>Pseudomonadota</taxon>
        <taxon>Alphaproteobacteria</taxon>
        <taxon>Rhodobacterales</taxon>
        <taxon>Roseobacteraceae</taxon>
        <taxon>Roseobacter</taxon>
    </lineage>
</organism>
<evidence type="ECO:0000255" key="1">
    <source>
        <dbReference type="HAMAP-Rule" id="MF_01547"/>
    </source>
</evidence>
<evidence type="ECO:0000256" key="2">
    <source>
        <dbReference type="SAM" id="MobiDB-lite"/>
    </source>
</evidence>
<feature type="chain" id="PRO_0000282791" description="Ribosomal RNA large subunit methyltransferase E">
    <location>
        <begin position="1"/>
        <end position="240"/>
    </location>
</feature>
<feature type="region of interest" description="Disordered" evidence="2">
    <location>
        <begin position="1"/>
        <end position="20"/>
    </location>
</feature>
<feature type="compositionally biased region" description="Polar residues" evidence="2">
    <location>
        <begin position="1"/>
        <end position="13"/>
    </location>
</feature>
<feature type="active site" description="Proton acceptor" evidence="1">
    <location>
        <position position="193"/>
    </location>
</feature>
<feature type="binding site" evidence="1">
    <location>
        <position position="85"/>
    </location>
    <ligand>
        <name>S-adenosyl-L-methionine</name>
        <dbReference type="ChEBI" id="CHEBI:59789"/>
    </ligand>
</feature>
<feature type="binding site" evidence="1">
    <location>
        <position position="87"/>
    </location>
    <ligand>
        <name>S-adenosyl-L-methionine</name>
        <dbReference type="ChEBI" id="CHEBI:59789"/>
    </ligand>
</feature>
<feature type="binding site" evidence="1">
    <location>
        <position position="113"/>
    </location>
    <ligand>
        <name>S-adenosyl-L-methionine</name>
        <dbReference type="ChEBI" id="CHEBI:59789"/>
    </ligand>
</feature>
<feature type="binding site" evidence="1">
    <location>
        <position position="129"/>
    </location>
    <ligand>
        <name>S-adenosyl-L-methionine</name>
        <dbReference type="ChEBI" id="CHEBI:59789"/>
    </ligand>
</feature>
<feature type="binding site" evidence="1">
    <location>
        <position position="153"/>
    </location>
    <ligand>
        <name>S-adenosyl-L-methionine</name>
        <dbReference type="ChEBI" id="CHEBI:59789"/>
    </ligand>
</feature>
<name>RLME_ROSDO</name>
<gene>
    <name evidence="1" type="primary">rlmE</name>
    <name evidence="1" type="synonym">ftsJ</name>
    <name evidence="1" type="synonym">rrmJ</name>
    <name type="ordered locus">RD1_3052</name>
</gene>
<sequence>MAKKPGSQNTSGRGQRDLKVKVKTARGRKLSSTRWLQRQLNDPYVKRARSEGYRGRAAYKILELDDRFRFLVPGARVVDLGCAPGGWCQVAVKRVNALGERTSKAQGSVLGVDLQEMEPIAGATLYQLDFMADDADEQVRVWLGGKADVVMSDMAASSSGHKQTDHLRIIALCEAAAYFAFDVLEEGGTFVAKVLAGGAEGELQKLLKQRFAKVANIKPPASRQDSSEKFVVATGFRAKA</sequence>
<keyword id="KW-0963">Cytoplasm</keyword>
<keyword id="KW-0489">Methyltransferase</keyword>
<keyword id="KW-1185">Reference proteome</keyword>
<keyword id="KW-0698">rRNA processing</keyword>
<keyword id="KW-0949">S-adenosyl-L-methionine</keyword>
<keyword id="KW-0808">Transferase</keyword>
<proteinExistence type="inferred from homology"/>
<protein>
    <recommendedName>
        <fullName evidence="1">Ribosomal RNA large subunit methyltransferase E</fullName>
        <ecNumber evidence="1">2.1.1.166</ecNumber>
    </recommendedName>
    <alternativeName>
        <fullName evidence="1">23S rRNA Um2552 methyltransferase</fullName>
    </alternativeName>
    <alternativeName>
        <fullName evidence="1">rRNA (uridine-2'-O-)-methyltransferase</fullName>
    </alternativeName>
</protein>
<comment type="function">
    <text evidence="1">Specifically methylates the uridine in position 2552 of 23S rRNA at the 2'-O position of the ribose in the fully assembled 50S ribosomal subunit.</text>
</comment>
<comment type="catalytic activity">
    <reaction evidence="1">
        <text>uridine(2552) in 23S rRNA + S-adenosyl-L-methionine = 2'-O-methyluridine(2552) in 23S rRNA + S-adenosyl-L-homocysteine + H(+)</text>
        <dbReference type="Rhea" id="RHEA:42720"/>
        <dbReference type="Rhea" id="RHEA-COMP:10202"/>
        <dbReference type="Rhea" id="RHEA-COMP:10203"/>
        <dbReference type="ChEBI" id="CHEBI:15378"/>
        <dbReference type="ChEBI" id="CHEBI:57856"/>
        <dbReference type="ChEBI" id="CHEBI:59789"/>
        <dbReference type="ChEBI" id="CHEBI:65315"/>
        <dbReference type="ChEBI" id="CHEBI:74478"/>
        <dbReference type="EC" id="2.1.1.166"/>
    </reaction>
</comment>
<comment type="subcellular location">
    <subcellularLocation>
        <location evidence="1">Cytoplasm</location>
    </subcellularLocation>
</comment>
<comment type="similarity">
    <text evidence="1">Belongs to the class I-like SAM-binding methyltransferase superfamily. RNA methyltransferase RlmE family.</text>
</comment>
<accession>Q164M8</accession>
<reference key="1">
    <citation type="journal article" date="2007" name="J. Bacteriol.">
        <title>The complete genome sequence of Roseobacter denitrificans reveals a mixotrophic rather than photosynthetic metabolism.</title>
        <authorList>
            <person name="Swingley W.D."/>
            <person name="Sadekar S."/>
            <person name="Mastrian S.D."/>
            <person name="Matthies H.J."/>
            <person name="Hao J."/>
            <person name="Ramos H."/>
            <person name="Acharya C.R."/>
            <person name="Conrad A.L."/>
            <person name="Taylor H.L."/>
            <person name="Dejesa L.C."/>
            <person name="Shah M.K."/>
            <person name="O'Huallachain M.E."/>
            <person name="Lince M.T."/>
            <person name="Blankenship R.E."/>
            <person name="Beatty J.T."/>
            <person name="Touchman J.W."/>
        </authorList>
    </citation>
    <scope>NUCLEOTIDE SEQUENCE [LARGE SCALE GENOMIC DNA]</scope>
    <source>
        <strain>ATCC 33942 / OCh 114</strain>
    </source>
</reference>
<dbReference type="EC" id="2.1.1.166" evidence="1"/>
<dbReference type="EMBL" id="CP000362">
    <property type="protein sequence ID" value="ABG32565.1"/>
    <property type="molecule type" value="Genomic_DNA"/>
</dbReference>
<dbReference type="RefSeq" id="WP_011569181.1">
    <property type="nucleotide sequence ID" value="NC_008209.1"/>
</dbReference>
<dbReference type="SMR" id="Q164M8"/>
<dbReference type="STRING" id="375451.RD1_3052"/>
<dbReference type="KEGG" id="rde:RD1_3052"/>
<dbReference type="eggNOG" id="COG0293">
    <property type="taxonomic scope" value="Bacteria"/>
</dbReference>
<dbReference type="HOGENOM" id="CLU_009422_4_2_5"/>
<dbReference type="OrthoDB" id="9790080at2"/>
<dbReference type="Proteomes" id="UP000007029">
    <property type="component" value="Chromosome"/>
</dbReference>
<dbReference type="GO" id="GO:0005737">
    <property type="term" value="C:cytoplasm"/>
    <property type="evidence" value="ECO:0007669"/>
    <property type="project" value="UniProtKB-SubCell"/>
</dbReference>
<dbReference type="GO" id="GO:0008650">
    <property type="term" value="F:rRNA (uridine-2'-O-)-methyltransferase activity"/>
    <property type="evidence" value="ECO:0007669"/>
    <property type="project" value="UniProtKB-UniRule"/>
</dbReference>
<dbReference type="Gene3D" id="3.40.50.150">
    <property type="entry name" value="Vaccinia Virus protein VP39"/>
    <property type="match status" value="1"/>
</dbReference>
<dbReference type="HAMAP" id="MF_01547">
    <property type="entry name" value="RNA_methyltr_E"/>
    <property type="match status" value="1"/>
</dbReference>
<dbReference type="InterPro" id="IPR050082">
    <property type="entry name" value="RNA_methyltr_RlmE"/>
</dbReference>
<dbReference type="InterPro" id="IPR002877">
    <property type="entry name" value="RNA_MeTrfase_FtsJ_dom"/>
</dbReference>
<dbReference type="InterPro" id="IPR015507">
    <property type="entry name" value="rRNA-MeTfrase_E"/>
</dbReference>
<dbReference type="InterPro" id="IPR029063">
    <property type="entry name" value="SAM-dependent_MTases_sf"/>
</dbReference>
<dbReference type="PANTHER" id="PTHR10920">
    <property type="entry name" value="RIBOSOMAL RNA METHYLTRANSFERASE"/>
    <property type="match status" value="1"/>
</dbReference>
<dbReference type="PANTHER" id="PTHR10920:SF18">
    <property type="entry name" value="RRNA METHYLTRANSFERASE 2, MITOCHONDRIAL"/>
    <property type="match status" value="1"/>
</dbReference>
<dbReference type="Pfam" id="PF01728">
    <property type="entry name" value="FtsJ"/>
    <property type="match status" value="1"/>
</dbReference>
<dbReference type="PIRSF" id="PIRSF005461">
    <property type="entry name" value="23S_rRNA_mtase"/>
    <property type="match status" value="1"/>
</dbReference>
<dbReference type="SUPFAM" id="SSF53335">
    <property type="entry name" value="S-adenosyl-L-methionine-dependent methyltransferases"/>
    <property type="match status" value="1"/>
</dbReference>